<protein>
    <recommendedName>
        <fullName evidence="1">Large ribosomal subunit protein bL33A</fullName>
    </recommendedName>
    <alternativeName>
        <fullName evidence="1">50S ribosomal protein L33 1</fullName>
    </alternativeName>
</protein>
<reference key="1">
    <citation type="journal article" date="2001" name="Proc. Natl. Acad. Sci. U.S.A.">
        <title>Complete genome sequence of an M1 strain of Streptococcus pyogenes.</title>
        <authorList>
            <person name="Ferretti J.J."/>
            <person name="McShan W.M."/>
            <person name="Ajdic D.J."/>
            <person name="Savic D.J."/>
            <person name="Savic G."/>
            <person name="Lyon K."/>
            <person name="Primeaux C."/>
            <person name="Sezate S."/>
            <person name="Suvorov A.N."/>
            <person name="Kenton S."/>
            <person name="Lai H.S."/>
            <person name="Lin S.P."/>
            <person name="Qian Y."/>
            <person name="Jia H.G."/>
            <person name="Najar F.Z."/>
            <person name="Ren Q."/>
            <person name="Zhu H."/>
            <person name="Song L."/>
            <person name="White J."/>
            <person name="Yuan X."/>
            <person name="Clifton S.W."/>
            <person name="Roe B.A."/>
            <person name="McLaughlin R.E."/>
        </authorList>
    </citation>
    <scope>NUCLEOTIDE SEQUENCE [LARGE SCALE GENOMIC DNA]</scope>
    <source>
        <strain>ATCC 700294 / SF370 / Serotype M1</strain>
    </source>
</reference>
<reference key="2">
    <citation type="journal article" date="2005" name="J. Infect. Dis.">
        <title>Evolutionary origin and emergence of a highly successful clone of serotype M1 group A Streptococcus involved multiple horizontal gene transfer events.</title>
        <authorList>
            <person name="Sumby P."/>
            <person name="Porcella S.F."/>
            <person name="Madrigal A.G."/>
            <person name="Barbian K.D."/>
            <person name="Virtaneva K."/>
            <person name="Ricklefs S.M."/>
            <person name="Sturdevant D.E."/>
            <person name="Graham M.R."/>
            <person name="Vuopio-Varkila J."/>
            <person name="Hoe N.P."/>
            <person name="Musser J.M."/>
        </authorList>
    </citation>
    <scope>NUCLEOTIDE SEQUENCE [LARGE SCALE GENOMIC DNA]</scope>
    <source>
        <strain>ATCC BAA-947 / MGAS5005 / Serotype M1</strain>
    </source>
</reference>
<keyword id="KW-1185">Reference proteome</keyword>
<keyword id="KW-0687">Ribonucleoprotein</keyword>
<keyword id="KW-0689">Ribosomal protein</keyword>
<name>RL331_STRP1</name>
<dbReference type="EMBL" id="AE004092">
    <property type="status" value="NOT_ANNOTATED_CDS"/>
    <property type="molecule type" value="Genomic_DNA"/>
</dbReference>
<dbReference type="EMBL" id="CP000017">
    <property type="protein sequence ID" value="AAZ51030.1"/>
    <property type="molecule type" value="Genomic_DNA"/>
</dbReference>
<dbReference type="SMR" id="Q490D8"/>
<dbReference type="KEGG" id="spz:M5005_Spy0412"/>
<dbReference type="HOGENOM" id="CLU_190949_0_2_9"/>
<dbReference type="PRO" id="PR:Q490D8"/>
<dbReference type="Proteomes" id="UP000000750">
    <property type="component" value="Chromosome"/>
</dbReference>
<dbReference type="GO" id="GO:0005737">
    <property type="term" value="C:cytoplasm"/>
    <property type="evidence" value="ECO:0007669"/>
    <property type="project" value="UniProtKB-ARBA"/>
</dbReference>
<dbReference type="GO" id="GO:1990904">
    <property type="term" value="C:ribonucleoprotein complex"/>
    <property type="evidence" value="ECO:0007669"/>
    <property type="project" value="UniProtKB-KW"/>
</dbReference>
<dbReference type="GO" id="GO:0005840">
    <property type="term" value="C:ribosome"/>
    <property type="evidence" value="ECO:0007669"/>
    <property type="project" value="UniProtKB-KW"/>
</dbReference>
<dbReference type="GO" id="GO:0003735">
    <property type="term" value="F:structural constituent of ribosome"/>
    <property type="evidence" value="ECO:0007669"/>
    <property type="project" value="InterPro"/>
</dbReference>
<dbReference type="GO" id="GO:0006412">
    <property type="term" value="P:translation"/>
    <property type="evidence" value="ECO:0007669"/>
    <property type="project" value="UniProtKB-UniRule"/>
</dbReference>
<dbReference type="Gene3D" id="2.20.28.120">
    <property type="entry name" value="Ribosomal protein L33"/>
    <property type="match status" value="1"/>
</dbReference>
<dbReference type="HAMAP" id="MF_00294">
    <property type="entry name" value="Ribosomal_bL33"/>
    <property type="match status" value="1"/>
</dbReference>
<dbReference type="InterPro" id="IPR001705">
    <property type="entry name" value="Ribosomal_bL33"/>
</dbReference>
<dbReference type="InterPro" id="IPR038584">
    <property type="entry name" value="Ribosomal_bL33_sf"/>
</dbReference>
<dbReference type="InterPro" id="IPR011332">
    <property type="entry name" value="Ribosomal_zn-bd"/>
</dbReference>
<dbReference type="NCBIfam" id="NF001764">
    <property type="entry name" value="PRK00504.1"/>
    <property type="match status" value="1"/>
</dbReference>
<dbReference type="NCBIfam" id="NF001860">
    <property type="entry name" value="PRK00595.1"/>
    <property type="match status" value="1"/>
</dbReference>
<dbReference type="NCBIfam" id="TIGR01023">
    <property type="entry name" value="rpmG_bact"/>
    <property type="match status" value="1"/>
</dbReference>
<dbReference type="PANTHER" id="PTHR43168">
    <property type="entry name" value="50S RIBOSOMAL PROTEIN L33, CHLOROPLASTIC"/>
    <property type="match status" value="1"/>
</dbReference>
<dbReference type="PANTHER" id="PTHR43168:SF6">
    <property type="entry name" value="LARGE RIBOSOMAL SUBUNIT PROTEIN BL33A"/>
    <property type="match status" value="1"/>
</dbReference>
<dbReference type="Pfam" id="PF00471">
    <property type="entry name" value="Ribosomal_L33"/>
    <property type="match status" value="1"/>
</dbReference>
<dbReference type="SUPFAM" id="SSF57829">
    <property type="entry name" value="Zn-binding ribosomal proteins"/>
    <property type="match status" value="1"/>
</dbReference>
<feature type="chain" id="PRO_0000356716" description="Large ribosomal subunit protein bL33A">
    <location>
        <begin position="1"/>
        <end position="48"/>
    </location>
</feature>
<accession>Q490D8</accession>
<proteinExistence type="inferred from homology"/>
<gene>
    <name evidence="1" type="primary">rpmG1</name>
    <name type="ordered locus">SPy_0501.1</name>
    <name type="ordered locus">M5005_Spy0412</name>
</gene>
<evidence type="ECO:0000255" key="1">
    <source>
        <dbReference type="HAMAP-Rule" id="MF_00294"/>
    </source>
</evidence>
<comment type="similarity">
    <text evidence="1">Belongs to the bacterial ribosomal protein bL33 family.</text>
</comment>
<organism>
    <name type="scientific">Streptococcus pyogenes serotype M1</name>
    <dbReference type="NCBI Taxonomy" id="301447"/>
    <lineage>
        <taxon>Bacteria</taxon>
        <taxon>Bacillati</taxon>
        <taxon>Bacillota</taxon>
        <taxon>Bacilli</taxon>
        <taxon>Lactobacillales</taxon>
        <taxon>Streptococcaceae</taxon>
        <taxon>Streptococcus</taxon>
    </lineage>
</organism>
<sequence>MRVKINLECSECGSNNYLTSKNKSSHPEKIKVPKYCPKERKVTLHVET</sequence>